<feature type="chain" id="PRO_0000383507" description="Probable 4-deoxy-4-formamido-L-arabinose-phosphoundecaprenol deformylase ArnD">
    <location>
        <begin position="1"/>
        <end position="296"/>
    </location>
</feature>
<feature type="domain" description="NodB homology" evidence="1">
    <location>
        <begin position="2"/>
        <end position="260"/>
    </location>
</feature>
<keyword id="KW-0046">Antibiotic resistance</keyword>
<keyword id="KW-0378">Hydrolase</keyword>
<keyword id="KW-0441">Lipid A biosynthesis</keyword>
<keyword id="KW-0444">Lipid biosynthesis</keyword>
<keyword id="KW-0443">Lipid metabolism</keyword>
<keyword id="KW-0448">Lipopolysaccharide biosynthesis</keyword>
<keyword id="KW-1185">Reference proteome</keyword>
<evidence type="ECO:0000255" key="1">
    <source>
        <dbReference type="HAMAP-Rule" id="MF_01870"/>
    </source>
</evidence>
<protein>
    <recommendedName>
        <fullName evidence="1">Probable 4-deoxy-4-formamido-L-arabinose-phosphoundecaprenol deformylase ArnD</fullName>
        <ecNumber evidence="1">3.5.1.n3</ecNumber>
    </recommendedName>
</protein>
<organism>
    <name type="scientific">Escherichia coli O45:K1 (strain S88 / ExPEC)</name>
    <dbReference type="NCBI Taxonomy" id="585035"/>
    <lineage>
        <taxon>Bacteria</taxon>
        <taxon>Pseudomonadati</taxon>
        <taxon>Pseudomonadota</taxon>
        <taxon>Gammaproteobacteria</taxon>
        <taxon>Enterobacterales</taxon>
        <taxon>Enterobacteriaceae</taxon>
        <taxon>Escherichia</taxon>
    </lineage>
</organism>
<dbReference type="EC" id="3.5.1.n3" evidence="1"/>
<dbReference type="EMBL" id="CU928161">
    <property type="protein sequence ID" value="CAR03685.1"/>
    <property type="molecule type" value="Genomic_DNA"/>
</dbReference>
<dbReference type="RefSeq" id="WP_000169712.1">
    <property type="nucleotide sequence ID" value="NC_011742.1"/>
</dbReference>
<dbReference type="SMR" id="B7MG23"/>
<dbReference type="KEGG" id="ecz:ECS88_2405"/>
<dbReference type="HOGENOM" id="CLU_084199_0_0_6"/>
<dbReference type="UniPathway" id="UPA00030"/>
<dbReference type="UniPathway" id="UPA00036">
    <property type="reaction ID" value="UER00496"/>
</dbReference>
<dbReference type="Proteomes" id="UP000000747">
    <property type="component" value="Chromosome"/>
</dbReference>
<dbReference type="GO" id="GO:0016020">
    <property type="term" value="C:membrane"/>
    <property type="evidence" value="ECO:0007669"/>
    <property type="project" value="GOC"/>
</dbReference>
<dbReference type="GO" id="GO:0016811">
    <property type="term" value="F:hydrolase activity, acting on carbon-nitrogen (but not peptide) bonds, in linear amides"/>
    <property type="evidence" value="ECO:0007669"/>
    <property type="project" value="UniProtKB-UniRule"/>
</dbReference>
<dbReference type="GO" id="GO:0036108">
    <property type="term" value="P:4-amino-4-deoxy-alpha-L-arabinopyranosyl undecaprenyl phosphate biosynthetic process"/>
    <property type="evidence" value="ECO:0007669"/>
    <property type="project" value="UniProtKB-UniRule"/>
</dbReference>
<dbReference type="GO" id="GO:0009245">
    <property type="term" value="P:lipid A biosynthetic process"/>
    <property type="evidence" value="ECO:0007669"/>
    <property type="project" value="UniProtKB-UniRule"/>
</dbReference>
<dbReference type="GO" id="GO:0009103">
    <property type="term" value="P:lipopolysaccharide biosynthetic process"/>
    <property type="evidence" value="ECO:0007669"/>
    <property type="project" value="UniProtKB-UniRule"/>
</dbReference>
<dbReference type="GO" id="GO:0046677">
    <property type="term" value="P:response to antibiotic"/>
    <property type="evidence" value="ECO:0007669"/>
    <property type="project" value="UniProtKB-KW"/>
</dbReference>
<dbReference type="CDD" id="cd10939">
    <property type="entry name" value="CE4_ArnD"/>
    <property type="match status" value="1"/>
</dbReference>
<dbReference type="Gene3D" id="3.20.20.370">
    <property type="entry name" value="Glycoside hydrolase/deacetylase"/>
    <property type="match status" value="1"/>
</dbReference>
<dbReference type="HAMAP" id="MF_01870">
    <property type="entry name" value="ArnD"/>
    <property type="match status" value="1"/>
</dbReference>
<dbReference type="InterPro" id="IPR023557">
    <property type="entry name" value="ArnD"/>
</dbReference>
<dbReference type="InterPro" id="IPR011330">
    <property type="entry name" value="Glyco_hydro/deAcase_b/a-brl"/>
</dbReference>
<dbReference type="InterPro" id="IPR002509">
    <property type="entry name" value="NODB_dom"/>
</dbReference>
<dbReference type="InterPro" id="IPR050248">
    <property type="entry name" value="Polysacc_deacetylase_ArnD"/>
</dbReference>
<dbReference type="NCBIfam" id="NF011923">
    <property type="entry name" value="PRK15394.1"/>
    <property type="match status" value="1"/>
</dbReference>
<dbReference type="PANTHER" id="PTHR10587:SF137">
    <property type="entry name" value="4-DEOXY-4-FORMAMIDO-L-ARABINOSE-PHOSPHOUNDECAPRENOL DEFORMYLASE ARND-RELATED"/>
    <property type="match status" value="1"/>
</dbReference>
<dbReference type="PANTHER" id="PTHR10587">
    <property type="entry name" value="GLYCOSYL TRANSFERASE-RELATED"/>
    <property type="match status" value="1"/>
</dbReference>
<dbReference type="Pfam" id="PF01522">
    <property type="entry name" value="Polysacc_deac_1"/>
    <property type="match status" value="1"/>
</dbReference>
<dbReference type="SUPFAM" id="SSF88713">
    <property type="entry name" value="Glycoside hydrolase/deacetylase"/>
    <property type="match status" value="1"/>
</dbReference>
<dbReference type="PROSITE" id="PS51677">
    <property type="entry name" value="NODB"/>
    <property type="match status" value="1"/>
</dbReference>
<comment type="function">
    <text evidence="1">Catalyzes the deformylation of 4-deoxy-4-formamido-L-arabinose-phosphoundecaprenol to 4-amino-4-deoxy-L-arabinose-phosphoundecaprenol. The modified arabinose is attached to lipid A and is required for resistance to polymyxin and cationic antimicrobial peptides.</text>
</comment>
<comment type="catalytic activity">
    <reaction evidence="1">
        <text>4-deoxy-4-formamido-alpha-L-arabinopyranosyl di-trans,octa-cis-undecaprenyl phosphate + H2O = 4-amino-4-deoxy-alpha-L-arabinopyranosyl di-trans,octa-cis-undecaprenyl phosphate + formate</text>
        <dbReference type="Rhea" id="RHEA:27734"/>
        <dbReference type="ChEBI" id="CHEBI:15377"/>
        <dbReference type="ChEBI" id="CHEBI:15740"/>
        <dbReference type="ChEBI" id="CHEBI:58909"/>
        <dbReference type="ChEBI" id="CHEBI:60463"/>
        <dbReference type="EC" id="3.5.1.n3"/>
    </reaction>
</comment>
<comment type="pathway">
    <text evidence="1">Glycolipid biosynthesis; 4-amino-4-deoxy-alpha-L-arabinose undecaprenyl phosphate biosynthesis; 4-amino-4-deoxy-alpha-L-arabinose undecaprenyl phosphate from UDP-4-deoxy-4-formamido-beta-L-arabinose and undecaprenyl phosphate: step 2/2.</text>
</comment>
<comment type="pathway">
    <text evidence="1">Bacterial outer membrane biogenesis; lipopolysaccharide biosynthesis.</text>
</comment>
<comment type="similarity">
    <text evidence="1">Belongs to the polysaccharide deacetylase family. ArnD deformylase subfamily.</text>
</comment>
<name>ARND_ECO45</name>
<accession>B7MG23</accession>
<sequence length="296" mass="33004">MTKVGLRIDVDTFRGTREGVPRLLEILSKHNIQASIFFSVGPDNMGRHLWRLVKPQFLWKMLRSNAASLYGWDILLAGTAWPGKEIGHANADIIREAAKHHEVGLHAWDHHAWQAHSGNWDRQTMIDDIARGLRTLEEIIGQPVTCSAAAGWRADQQVIEAKEAFHLRYNSDCRGAMPFRPLLESGTPGTAQIPVTLPTWDEVIGRDVKAEDFNGWLLNRIQRDKGTPVYTIHAEVEGCAYQHNFVDLLKRAAQEGVTFCPLSELLSGTLPLGQVVRGNIAGREGWLGCQQIAGSH</sequence>
<proteinExistence type="inferred from homology"/>
<reference key="1">
    <citation type="journal article" date="2009" name="PLoS Genet.">
        <title>Organised genome dynamics in the Escherichia coli species results in highly diverse adaptive paths.</title>
        <authorList>
            <person name="Touchon M."/>
            <person name="Hoede C."/>
            <person name="Tenaillon O."/>
            <person name="Barbe V."/>
            <person name="Baeriswyl S."/>
            <person name="Bidet P."/>
            <person name="Bingen E."/>
            <person name="Bonacorsi S."/>
            <person name="Bouchier C."/>
            <person name="Bouvet O."/>
            <person name="Calteau A."/>
            <person name="Chiapello H."/>
            <person name="Clermont O."/>
            <person name="Cruveiller S."/>
            <person name="Danchin A."/>
            <person name="Diard M."/>
            <person name="Dossat C."/>
            <person name="Karoui M.E."/>
            <person name="Frapy E."/>
            <person name="Garry L."/>
            <person name="Ghigo J.M."/>
            <person name="Gilles A.M."/>
            <person name="Johnson J."/>
            <person name="Le Bouguenec C."/>
            <person name="Lescat M."/>
            <person name="Mangenot S."/>
            <person name="Martinez-Jehanne V."/>
            <person name="Matic I."/>
            <person name="Nassif X."/>
            <person name="Oztas S."/>
            <person name="Petit M.A."/>
            <person name="Pichon C."/>
            <person name="Rouy Z."/>
            <person name="Ruf C.S."/>
            <person name="Schneider D."/>
            <person name="Tourret J."/>
            <person name="Vacherie B."/>
            <person name="Vallenet D."/>
            <person name="Medigue C."/>
            <person name="Rocha E.P.C."/>
            <person name="Denamur E."/>
        </authorList>
    </citation>
    <scope>NUCLEOTIDE SEQUENCE [LARGE SCALE GENOMIC DNA]</scope>
    <source>
        <strain>S88 / ExPEC</strain>
    </source>
</reference>
<gene>
    <name evidence="1" type="primary">arnD</name>
    <name type="ordered locus">ECS88_2405</name>
</gene>